<reference key="1">
    <citation type="submission" date="2004-11" db="EMBL/GenBank/DDBJ databases">
        <authorList>
            <consortium name="The German cDNA consortium"/>
        </authorList>
    </citation>
    <scope>NUCLEOTIDE SEQUENCE [LARGE SCALE MRNA]</scope>
    <source>
        <tissue>Brain cortex</tissue>
    </source>
</reference>
<sequence>MELAMDNSYAFNQRSTCNGIPSEKKNNFLVSEDHGQKILSVLQNFREQNVFYDFKIIMKDEIIPCHRCVLAACSDFFRAMFEVNMKERDDGSVTITNLSSKAVKAFLDYAYTGKTKITDDNVEMFFQLSSFLQVSFLSKACSDFLIKSINLVNCLQLLSISDSYGSTSLFDHALHFVQHHFSLLFKSGDFLEMNFGVLQKCLESDELNVPEEEMVLKVVLSWTKHNLESRQKYLPHLIEKVRLHQLSEETLQDCLFNEESLLKSTNCFDIIMDAIKCVKGSGGLFPDARPSTTEKYIFIHKTEENGENQYTFCYNIKSDSWKILPQSHLIDLPGSSLSSYGEKIFLTGGCKGKCCRTIRLHIAESYHDATDQTWCYCPVKNDFFLVSTMKTPRTMHTSVMALDRLFVIGGKTRGSRDIKSLLDVESYNPLSKEWISVSPLPRGIYYPEASTCQNVIYVLGSEVEITDAFNPSLDCFFKYNAATDQWSELVAEFGQFFHATLIKAVPVNCTLYICDLSTYKVYSFCPDTCVWKGEGSFECAGFNAGAIGIEDKIYILGGDYAPDEITDEVQVYHSNRSEWEEVSPMPRALTEFYCQVIQFNKYRDPWFSNLCA</sequence>
<dbReference type="EMBL" id="CR860633">
    <property type="protein sequence ID" value="CAH92753.1"/>
    <property type="molecule type" value="mRNA"/>
</dbReference>
<dbReference type="RefSeq" id="NP_001126605.1">
    <property type="nucleotide sequence ID" value="NM_001133133.1"/>
</dbReference>
<dbReference type="SMR" id="Q5R663"/>
<dbReference type="FunCoup" id="Q5R663">
    <property type="interactions" value="70"/>
</dbReference>
<dbReference type="STRING" id="9601.ENSPPYP00000004383"/>
<dbReference type="GeneID" id="100173602"/>
<dbReference type="KEGG" id="pon:100173602"/>
<dbReference type="CTD" id="143879"/>
<dbReference type="eggNOG" id="KOG4441">
    <property type="taxonomic scope" value="Eukaryota"/>
</dbReference>
<dbReference type="InParanoid" id="Q5R663"/>
<dbReference type="OrthoDB" id="25620at2759"/>
<dbReference type="Proteomes" id="UP000001595">
    <property type="component" value="Unplaced"/>
</dbReference>
<dbReference type="CDD" id="cd18480">
    <property type="entry name" value="BACK_KBTBD3"/>
    <property type="match status" value="1"/>
</dbReference>
<dbReference type="CDD" id="cd18271">
    <property type="entry name" value="BTB_POZ_KBTBD3_BKLHD3"/>
    <property type="match status" value="1"/>
</dbReference>
<dbReference type="FunFam" id="1.25.40.420:FF:000001">
    <property type="entry name" value="Kelch-like family member 12"/>
    <property type="match status" value="1"/>
</dbReference>
<dbReference type="Gene3D" id="1.25.40.420">
    <property type="match status" value="1"/>
</dbReference>
<dbReference type="Gene3D" id="2.120.10.80">
    <property type="entry name" value="Kelch-type beta propeller"/>
    <property type="match status" value="1"/>
</dbReference>
<dbReference type="Gene3D" id="3.30.710.10">
    <property type="entry name" value="Potassium Channel Kv1.1, Chain A"/>
    <property type="match status" value="1"/>
</dbReference>
<dbReference type="InterPro" id="IPR011705">
    <property type="entry name" value="BACK"/>
</dbReference>
<dbReference type="InterPro" id="IPR017096">
    <property type="entry name" value="BTB-kelch_protein"/>
</dbReference>
<dbReference type="InterPro" id="IPR000210">
    <property type="entry name" value="BTB/POZ_dom"/>
</dbReference>
<dbReference type="InterPro" id="IPR030589">
    <property type="entry name" value="BTB/POZ_KBTBD3"/>
</dbReference>
<dbReference type="InterPro" id="IPR047062">
    <property type="entry name" value="KBTBD3_BACK"/>
</dbReference>
<dbReference type="InterPro" id="IPR015915">
    <property type="entry name" value="Kelch-typ_b-propeller"/>
</dbReference>
<dbReference type="InterPro" id="IPR006652">
    <property type="entry name" value="Kelch_1"/>
</dbReference>
<dbReference type="InterPro" id="IPR011333">
    <property type="entry name" value="SKP1/BTB/POZ_sf"/>
</dbReference>
<dbReference type="PANTHER" id="PTHR24412">
    <property type="entry name" value="KELCH PROTEIN"/>
    <property type="match status" value="1"/>
</dbReference>
<dbReference type="PANTHER" id="PTHR24412:SF418">
    <property type="entry name" value="KELCH REPEAT AND BTB DOMAIN-CONTAINING PROTEIN 3"/>
    <property type="match status" value="1"/>
</dbReference>
<dbReference type="Pfam" id="PF07707">
    <property type="entry name" value="BACK"/>
    <property type="match status" value="1"/>
</dbReference>
<dbReference type="Pfam" id="PF00651">
    <property type="entry name" value="BTB"/>
    <property type="match status" value="1"/>
</dbReference>
<dbReference type="Pfam" id="PF01344">
    <property type="entry name" value="Kelch_1"/>
    <property type="match status" value="2"/>
</dbReference>
<dbReference type="PIRSF" id="PIRSF037037">
    <property type="entry name" value="Kelch-like_protein_gigaxonin"/>
    <property type="match status" value="1"/>
</dbReference>
<dbReference type="SMART" id="SM00875">
    <property type="entry name" value="BACK"/>
    <property type="match status" value="1"/>
</dbReference>
<dbReference type="SMART" id="SM00225">
    <property type="entry name" value="BTB"/>
    <property type="match status" value="1"/>
</dbReference>
<dbReference type="SMART" id="SM00612">
    <property type="entry name" value="Kelch"/>
    <property type="match status" value="3"/>
</dbReference>
<dbReference type="SUPFAM" id="SSF117281">
    <property type="entry name" value="Kelch motif"/>
    <property type="match status" value="1"/>
</dbReference>
<dbReference type="SUPFAM" id="SSF54695">
    <property type="entry name" value="POZ domain"/>
    <property type="match status" value="1"/>
</dbReference>
<dbReference type="PROSITE" id="PS50097">
    <property type="entry name" value="BTB"/>
    <property type="match status" value="1"/>
</dbReference>
<gene>
    <name evidence="1" type="primary">KBTBD3</name>
</gene>
<accession>Q5R663</accession>
<keyword id="KW-0880">Kelch repeat</keyword>
<keyword id="KW-1185">Reference proteome</keyword>
<keyword id="KW-0677">Repeat</keyword>
<evidence type="ECO:0000250" key="1">
    <source>
        <dbReference type="UniProtKB" id="Q8NAB2"/>
    </source>
</evidence>
<evidence type="ECO:0000255" key="2"/>
<evidence type="ECO:0000255" key="3">
    <source>
        <dbReference type="PROSITE-ProRule" id="PRU00037"/>
    </source>
</evidence>
<evidence type="ECO:0000305" key="4"/>
<comment type="caution">
    <text evidence="4">It is uncertain whether Met-1 or Met-5 is the initiator.</text>
</comment>
<proteinExistence type="evidence at transcript level"/>
<feature type="chain" id="PRO_0000286394" description="Kelch repeat and BTB domain-containing protein 3">
    <location>
        <begin position="1"/>
        <end position="612"/>
    </location>
</feature>
<feature type="domain" description="BTB" evidence="3">
    <location>
        <begin position="52"/>
        <end position="119"/>
    </location>
</feature>
<feature type="domain" description="BACK" evidence="2">
    <location>
        <begin position="150"/>
        <end position="250"/>
    </location>
</feature>
<feature type="repeat" description="Kelch 1" evidence="2">
    <location>
        <begin position="291"/>
        <end position="337"/>
    </location>
</feature>
<feature type="repeat" description="Kelch 2" evidence="2">
    <location>
        <begin position="339"/>
        <end position="390"/>
    </location>
</feature>
<feature type="repeat" description="Kelch 3" evidence="2">
    <location>
        <begin position="400"/>
        <end position="450"/>
    </location>
</feature>
<feature type="repeat" description="Kelch 4" evidence="2">
    <location>
        <begin position="452"/>
        <end position="502"/>
    </location>
</feature>
<feature type="repeat" description="Kelch 5" evidence="2">
    <location>
        <begin position="548"/>
        <end position="595"/>
    </location>
</feature>
<organism>
    <name type="scientific">Pongo abelii</name>
    <name type="common">Sumatran orangutan</name>
    <name type="synonym">Pongo pygmaeus abelii</name>
    <dbReference type="NCBI Taxonomy" id="9601"/>
    <lineage>
        <taxon>Eukaryota</taxon>
        <taxon>Metazoa</taxon>
        <taxon>Chordata</taxon>
        <taxon>Craniata</taxon>
        <taxon>Vertebrata</taxon>
        <taxon>Euteleostomi</taxon>
        <taxon>Mammalia</taxon>
        <taxon>Eutheria</taxon>
        <taxon>Euarchontoglires</taxon>
        <taxon>Primates</taxon>
        <taxon>Haplorrhini</taxon>
        <taxon>Catarrhini</taxon>
        <taxon>Hominidae</taxon>
        <taxon>Pongo</taxon>
    </lineage>
</organism>
<protein>
    <recommendedName>
        <fullName evidence="4">Kelch repeat and BTB domain-containing protein 3</fullName>
    </recommendedName>
</protein>
<name>KBTB3_PONAB</name>